<comment type="function">
    <text evidence="3">Purine salvage pathway enzyme that catalyzes the transfer of the ribosyl-5-phosphate group from 5-phospho-alpha-D-ribose 1-diphosphate (PRPP) to the N9 position of the 6-oxopurines hypoxanthine and guanine to form the corresponding ribonucleotides IMP (inosine 5'-monophosphate) and GMP (guanosine 5'-monophosphate), with the release of PPi.</text>
</comment>
<comment type="catalytic activity">
    <reaction evidence="3">
        <text>IMP + diphosphate = hypoxanthine + 5-phospho-alpha-D-ribose 1-diphosphate</text>
        <dbReference type="Rhea" id="RHEA:17973"/>
        <dbReference type="ChEBI" id="CHEBI:17368"/>
        <dbReference type="ChEBI" id="CHEBI:33019"/>
        <dbReference type="ChEBI" id="CHEBI:58017"/>
        <dbReference type="ChEBI" id="CHEBI:58053"/>
        <dbReference type="EC" id="2.4.2.8"/>
    </reaction>
    <physiologicalReaction direction="right-to-left" evidence="3">
        <dbReference type="Rhea" id="RHEA:17975"/>
    </physiologicalReaction>
</comment>
<comment type="catalytic activity">
    <reaction evidence="3">
        <text>GMP + diphosphate = guanine + 5-phospho-alpha-D-ribose 1-diphosphate</text>
        <dbReference type="Rhea" id="RHEA:25424"/>
        <dbReference type="ChEBI" id="CHEBI:16235"/>
        <dbReference type="ChEBI" id="CHEBI:33019"/>
        <dbReference type="ChEBI" id="CHEBI:58017"/>
        <dbReference type="ChEBI" id="CHEBI:58115"/>
        <dbReference type="EC" id="2.4.2.8"/>
    </reaction>
    <physiologicalReaction direction="right-to-left" evidence="3">
        <dbReference type="Rhea" id="RHEA:25426"/>
    </physiologicalReaction>
</comment>
<comment type="cofactor">
    <cofactor evidence="3">
        <name>Mg(2+)</name>
        <dbReference type="ChEBI" id="CHEBI:18420"/>
    </cofactor>
</comment>
<comment type="pathway">
    <text evidence="3">Purine metabolism; IMP biosynthesis via salvage pathway; IMP from hypoxanthine: step 1/1.</text>
</comment>
<comment type="pathway">
    <text evidence="3">Purine metabolism; GMP biosynthesis via salvage pathway; GMP from guanine: step 1/1.</text>
</comment>
<comment type="subcellular location">
    <subcellularLocation>
        <location evidence="1">Cytoplasm</location>
    </subcellularLocation>
</comment>
<comment type="similarity">
    <text evidence="4">Belongs to the purine/pyrimidine phosphoribosyltransferase family.</text>
</comment>
<proteinExistence type="inferred from homology"/>
<feature type="chain" id="PRO_0000139619" description="Hypoxanthine-guanine phosphoribosyltransferase">
    <location>
        <begin position="1"/>
        <end position="179"/>
    </location>
</feature>
<feature type="active site" description="Proton acceptor" evidence="2">
    <location>
        <position position="102"/>
    </location>
</feature>
<feature type="binding site" evidence="3">
    <location>
        <position position="42"/>
    </location>
    <ligand>
        <name>diphosphate</name>
        <dbReference type="ChEBI" id="CHEBI:33019"/>
    </ligand>
</feature>
<feature type="binding site" evidence="3">
    <location>
        <position position="43"/>
    </location>
    <ligand>
        <name>diphosphate</name>
        <dbReference type="ChEBI" id="CHEBI:33019"/>
    </ligand>
</feature>
<feature type="binding site" evidence="3">
    <location>
        <position position="98"/>
    </location>
    <ligand>
        <name>Mg(2+)</name>
        <dbReference type="ChEBI" id="CHEBI:18420"/>
    </ligand>
</feature>
<feature type="binding site" evidence="3">
    <location>
        <position position="99"/>
    </location>
    <ligand>
        <name>Mg(2+)</name>
        <dbReference type="ChEBI" id="CHEBI:18420"/>
    </ligand>
</feature>
<feature type="binding site" evidence="3">
    <location>
        <position position="130"/>
    </location>
    <ligand>
        <name>GMP</name>
        <dbReference type="ChEBI" id="CHEBI:58115"/>
    </ligand>
</feature>
<feature type="binding site" evidence="3">
    <location>
        <begin position="151"/>
        <end position="152"/>
    </location>
    <ligand>
        <name>GMP</name>
        <dbReference type="ChEBI" id="CHEBI:58115"/>
    </ligand>
</feature>
<feature type="binding site" evidence="3">
    <location>
        <position position="158"/>
    </location>
    <ligand>
        <name>GMP</name>
        <dbReference type="ChEBI" id="CHEBI:58115"/>
    </ligand>
</feature>
<feature type="binding site" evidence="3">
    <location>
        <position position="164"/>
    </location>
    <ligand>
        <name>diphosphate</name>
        <dbReference type="ChEBI" id="CHEBI:33019"/>
    </ligand>
</feature>
<evidence type="ECO:0000250" key="1"/>
<evidence type="ECO:0000250" key="2">
    <source>
        <dbReference type="UniProtKB" id="P0A9M2"/>
    </source>
</evidence>
<evidence type="ECO:0000250" key="3">
    <source>
        <dbReference type="UniProtKB" id="P9WHQ9"/>
    </source>
</evidence>
<evidence type="ECO:0000305" key="4"/>
<dbReference type="EC" id="2.4.2.8" evidence="3"/>
<dbReference type="EMBL" id="CP000029">
    <property type="protein sequence ID" value="AAW53518.1"/>
    <property type="molecule type" value="Genomic_DNA"/>
</dbReference>
<dbReference type="RefSeq" id="WP_001832216.1">
    <property type="nucleotide sequence ID" value="NC_002976.3"/>
</dbReference>
<dbReference type="SMR" id="Q5HRP4"/>
<dbReference type="STRING" id="176279.SERP0149"/>
<dbReference type="GeneID" id="50019579"/>
<dbReference type="KEGG" id="ser:SERP0149"/>
<dbReference type="eggNOG" id="COG0634">
    <property type="taxonomic scope" value="Bacteria"/>
</dbReference>
<dbReference type="HOGENOM" id="CLU_073615_0_0_9"/>
<dbReference type="UniPathway" id="UPA00591">
    <property type="reaction ID" value="UER00648"/>
</dbReference>
<dbReference type="UniPathway" id="UPA00909">
    <property type="reaction ID" value="UER00887"/>
</dbReference>
<dbReference type="Proteomes" id="UP000000531">
    <property type="component" value="Chromosome"/>
</dbReference>
<dbReference type="GO" id="GO:0005829">
    <property type="term" value="C:cytosol"/>
    <property type="evidence" value="ECO:0007669"/>
    <property type="project" value="TreeGrafter"/>
</dbReference>
<dbReference type="GO" id="GO:0052657">
    <property type="term" value="F:guanine phosphoribosyltransferase activity"/>
    <property type="evidence" value="ECO:0007669"/>
    <property type="project" value="RHEA"/>
</dbReference>
<dbReference type="GO" id="GO:0004422">
    <property type="term" value="F:hypoxanthine phosphoribosyltransferase activity"/>
    <property type="evidence" value="ECO:0007669"/>
    <property type="project" value="InterPro"/>
</dbReference>
<dbReference type="GO" id="GO:0000287">
    <property type="term" value="F:magnesium ion binding"/>
    <property type="evidence" value="ECO:0007669"/>
    <property type="project" value="TreeGrafter"/>
</dbReference>
<dbReference type="GO" id="GO:0000166">
    <property type="term" value="F:nucleotide binding"/>
    <property type="evidence" value="ECO:0007669"/>
    <property type="project" value="UniProtKB-KW"/>
</dbReference>
<dbReference type="GO" id="GO:0032263">
    <property type="term" value="P:GMP salvage"/>
    <property type="evidence" value="ECO:0007669"/>
    <property type="project" value="UniProtKB-UniPathway"/>
</dbReference>
<dbReference type="GO" id="GO:0006178">
    <property type="term" value="P:guanine salvage"/>
    <property type="evidence" value="ECO:0007669"/>
    <property type="project" value="TreeGrafter"/>
</dbReference>
<dbReference type="GO" id="GO:0046100">
    <property type="term" value="P:hypoxanthine metabolic process"/>
    <property type="evidence" value="ECO:0007669"/>
    <property type="project" value="TreeGrafter"/>
</dbReference>
<dbReference type="GO" id="GO:0032264">
    <property type="term" value="P:IMP salvage"/>
    <property type="evidence" value="ECO:0007669"/>
    <property type="project" value="UniProtKB-UniPathway"/>
</dbReference>
<dbReference type="GO" id="GO:0006166">
    <property type="term" value="P:purine ribonucleoside salvage"/>
    <property type="evidence" value="ECO:0007669"/>
    <property type="project" value="UniProtKB-KW"/>
</dbReference>
<dbReference type="CDD" id="cd06223">
    <property type="entry name" value="PRTases_typeI"/>
    <property type="match status" value="1"/>
</dbReference>
<dbReference type="FunFam" id="3.40.50.2020:FF:000006">
    <property type="entry name" value="Hypoxanthine phosphoribosyltransferase"/>
    <property type="match status" value="1"/>
</dbReference>
<dbReference type="Gene3D" id="3.40.50.2020">
    <property type="match status" value="1"/>
</dbReference>
<dbReference type="InterPro" id="IPR050408">
    <property type="entry name" value="HGPRT"/>
</dbReference>
<dbReference type="InterPro" id="IPR005904">
    <property type="entry name" value="Hxn_phspho_trans"/>
</dbReference>
<dbReference type="InterPro" id="IPR000836">
    <property type="entry name" value="PRibTrfase_dom"/>
</dbReference>
<dbReference type="InterPro" id="IPR029057">
    <property type="entry name" value="PRTase-like"/>
</dbReference>
<dbReference type="NCBIfam" id="TIGR01203">
    <property type="entry name" value="HGPRTase"/>
    <property type="match status" value="1"/>
</dbReference>
<dbReference type="PANTHER" id="PTHR43340:SF1">
    <property type="entry name" value="HYPOXANTHINE PHOSPHORIBOSYLTRANSFERASE"/>
    <property type="match status" value="1"/>
</dbReference>
<dbReference type="PANTHER" id="PTHR43340">
    <property type="entry name" value="HYPOXANTHINE-GUANINE PHOSPHORIBOSYLTRANSFERASE"/>
    <property type="match status" value="1"/>
</dbReference>
<dbReference type="Pfam" id="PF00156">
    <property type="entry name" value="Pribosyltran"/>
    <property type="match status" value="1"/>
</dbReference>
<dbReference type="SUPFAM" id="SSF53271">
    <property type="entry name" value="PRTase-like"/>
    <property type="match status" value="1"/>
</dbReference>
<name>HGPRT_STAEQ</name>
<sequence>MHKDLKNVLLSEEDIQNICKEMGAIITEDYKDRPLVCVGILKGSVMFMADLIKRIDTHLSIDFMDVSSYHGGTESTGEVQILKDLGASIENKDVLIIEDILETGTTLKSITELLQSRKVNSLEIATLLDKPNRRKADIEAKYVGKKIPDEFVVGYGLDYRELYRNLPYIGTLKAEVYSK</sequence>
<reference key="1">
    <citation type="journal article" date="2005" name="J. Bacteriol.">
        <title>Insights on evolution of virulence and resistance from the complete genome analysis of an early methicillin-resistant Staphylococcus aureus strain and a biofilm-producing methicillin-resistant Staphylococcus epidermidis strain.</title>
        <authorList>
            <person name="Gill S.R."/>
            <person name="Fouts D.E."/>
            <person name="Archer G.L."/>
            <person name="Mongodin E.F."/>
            <person name="DeBoy R.T."/>
            <person name="Ravel J."/>
            <person name="Paulsen I.T."/>
            <person name="Kolonay J.F."/>
            <person name="Brinkac L.M."/>
            <person name="Beanan M.J."/>
            <person name="Dodson R.J."/>
            <person name="Daugherty S.C."/>
            <person name="Madupu R."/>
            <person name="Angiuoli S.V."/>
            <person name="Durkin A.S."/>
            <person name="Haft D.H."/>
            <person name="Vamathevan J.J."/>
            <person name="Khouri H."/>
            <person name="Utterback T.R."/>
            <person name="Lee C."/>
            <person name="Dimitrov G."/>
            <person name="Jiang L."/>
            <person name="Qin H."/>
            <person name="Weidman J."/>
            <person name="Tran K."/>
            <person name="Kang K.H."/>
            <person name="Hance I.R."/>
            <person name="Nelson K.E."/>
            <person name="Fraser C.M."/>
        </authorList>
    </citation>
    <scope>NUCLEOTIDE SEQUENCE [LARGE SCALE GENOMIC DNA]</scope>
    <source>
        <strain>ATCC 35984 / DSM 28319 / BCRC 17069 / CCUG 31568 / BM 3577 / RP62A</strain>
    </source>
</reference>
<protein>
    <recommendedName>
        <fullName>Hypoxanthine-guanine phosphoribosyltransferase</fullName>
        <shortName>HGPRT</shortName>
        <shortName>HGPRTase</shortName>
        <ecNumber evidence="3">2.4.2.8</ecNumber>
    </recommendedName>
</protein>
<keyword id="KW-0963">Cytoplasm</keyword>
<keyword id="KW-0328">Glycosyltransferase</keyword>
<keyword id="KW-0460">Magnesium</keyword>
<keyword id="KW-0479">Metal-binding</keyword>
<keyword id="KW-0547">Nucleotide-binding</keyword>
<keyword id="KW-0660">Purine salvage</keyword>
<keyword id="KW-1185">Reference proteome</keyword>
<keyword id="KW-0808">Transferase</keyword>
<gene>
    <name type="primary">hpt</name>
    <name type="ordered locus">SERP0149</name>
</gene>
<organism>
    <name type="scientific">Staphylococcus epidermidis (strain ATCC 35984 / DSM 28319 / BCRC 17069 / CCUG 31568 / BM 3577 / RP62A)</name>
    <dbReference type="NCBI Taxonomy" id="176279"/>
    <lineage>
        <taxon>Bacteria</taxon>
        <taxon>Bacillati</taxon>
        <taxon>Bacillota</taxon>
        <taxon>Bacilli</taxon>
        <taxon>Bacillales</taxon>
        <taxon>Staphylococcaceae</taxon>
        <taxon>Staphylococcus</taxon>
    </lineage>
</organism>
<accession>Q5HRP4</accession>